<protein>
    <recommendedName>
        <fullName evidence="1">ATP-dependent dethiobiotin synthetase BioD 1</fullName>
        <ecNumber evidence="1">6.3.3.3</ecNumber>
    </recommendedName>
    <alternativeName>
        <fullName evidence="1">DTB synthetase 1</fullName>
        <shortName evidence="1">DTBS 1</shortName>
    </alternativeName>
    <alternativeName>
        <fullName evidence="1">Dethiobiotin synthase 1</fullName>
    </alternativeName>
</protein>
<proteinExistence type="inferred from homology"/>
<keyword id="KW-0067">ATP-binding</keyword>
<keyword id="KW-0093">Biotin biosynthesis</keyword>
<keyword id="KW-0963">Cytoplasm</keyword>
<keyword id="KW-0436">Ligase</keyword>
<keyword id="KW-0460">Magnesium</keyword>
<keyword id="KW-0479">Metal-binding</keyword>
<keyword id="KW-0547">Nucleotide-binding</keyword>
<keyword id="KW-1185">Reference proteome</keyword>
<gene>
    <name evidence="1" type="primary">bioD1</name>
    <name type="ordered locus">PM0641</name>
</gene>
<dbReference type="EC" id="6.3.3.3" evidence="1"/>
<dbReference type="EMBL" id="AE004439">
    <property type="protein sequence ID" value="AAK02725.1"/>
    <property type="molecule type" value="Genomic_DNA"/>
</dbReference>
<dbReference type="SMR" id="Q9CN08"/>
<dbReference type="STRING" id="272843.PM0641"/>
<dbReference type="EnsemblBacteria" id="AAK02725">
    <property type="protein sequence ID" value="AAK02725"/>
    <property type="gene ID" value="PM0641"/>
</dbReference>
<dbReference type="KEGG" id="pmu:PM0641"/>
<dbReference type="PATRIC" id="fig|272843.6.peg.649"/>
<dbReference type="HOGENOM" id="CLU_072551_0_0_6"/>
<dbReference type="OrthoDB" id="9802097at2"/>
<dbReference type="UniPathway" id="UPA00078">
    <property type="reaction ID" value="UER00161"/>
</dbReference>
<dbReference type="Proteomes" id="UP000000809">
    <property type="component" value="Chromosome"/>
</dbReference>
<dbReference type="GO" id="GO:0005829">
    <property type="term" value="C:cytosol"/>
    <property type="evidence" value="ECO:0007669"/>
    <property type="project" value="TreeGrafter"/>
</dbReference>
<dbReference type="GO" id="GO:0005524">
    <property type="term" value="F:ATP binding"/>
    <property type="evidence" value="ECO:0007669"/>
    <property type="project" value="UniProtKB-UniRule"/>
</dbReference>
<dbReference type="GO" id="GO:0004141">
    <property type="term" value="F:dethiobiotin synthase activity"/>
    <property type="evidence" value="ECO:0007669"/>
    <property type="project" value="UniProtKB-UniRule"/>
</dbReference>
<dbReference type="GO" id="GO:0000287">
    <property type="term" value="F:magnesium ion binding"/>
    <property type="evidence" value="ECO:0007669"/>
    <property type="project" value="UniProtKB-UniRule"/>
</dbReference>
<dbReference type="GO" id="GO:0009102">
    <property type="term" value="P:biotin biosynthetic process"/>
    <property type="evidence" value="ECO:0007669"/>
    <property type="project" value="UniProtKB-UniRule"/>
</dbReference>
<dbReference type="CDD" id="cd03109">
    <property type="entry name" value="DTBS"/>
    <property type="match status" value="1"/>
</dbReference>
<dbReference type="FunFam" id="3.40.50.300:FF:000292">
    <property type="entry name" value="ATP-dependent dethiobiotin synthetase BioD"/>
    <property type="match status" value="1"/>
</dbReference>
<dbReference type="Gene3D" id="3.40.50.300">
    <property type="entry name" value="P-loop containing nucleotide triphosphate hydrolases"/>
    <property type="match status" value="1"/>
</dbReference>
<dbReference type="HAMAP" id="MF_00336">
    <property type="entry name" value="BioD"/>
    <property type="match status" value="1"/>
</dbReference>
<dbReference type="InterPro" id="IPR004472">
    <property type="entry name" value="DTB_synth_BioD"/>
</dbReference>
<dbReference type="InterPro" id="IPR027417">
    <property type="entry name" value="P-loop_NTPase"/>
</dbReference>
<dbReference type="NCBIfam" id="TIGR00347">
    <property type="entry name" value="bioD"/>
    <property type="match status" value="1"/>
</dbReference>
<dbReference type="PANTHER" id="PTHR43210">
    <property type="entry name" value="DETHIOBIOTIN SYNTHETASE"/>
    <property type="match status" value="1"/>
</dbReference>
<dbReference type="PANTHER" id="PTHR43210:SF5">
    <property type="entry name" value="DETHIOBIOTIN SYNTHETASE"/>
    <property type="match status" value="1"/>
</dbReference>
<dbReference type="Pfam" id="PF13500">
    <property type="entry name" value="AAA_26"/>
    <property type="match status" value="1"/>
</dbReference>
<dbReference type="PIRSF" id="PIRSF006755">
    <property type="entry name" value="DTB_synth"/>
    <property type="match status" value="1"/>
</dbReference>
<dbReference type="SUPFAM" id="SSF52540">
    <property type="entry name" value="P-loop containing nucleoside triphosphate hydrolases"/>
    <property type="match status" value="1"/>
</dbReference>
<reference key="1">
    <citation type="journal article" date="2001" name="Proc. Natl. Acad. Sci. U.S.A.">
        <title>Complete genomic sequence of Pasteurella multocida Pm70.</title>
        <authorList>
            <person name="May B.J."/>
            <person name="Zhang Q."/>
            <person name="Li L.L."/>
            <person name="Paustian M.L."/>
            <person name="Whittam T.S."/>
            <person name="Kapur V."/>
        </authorList>
    </citation>
    <scope>NUCLEOTIDE SEQUENCE [LARGE SCALE GENOMIC DNA]</scope>
    <source>
        <strain>Pm70</strain>
    </source>
</reference>
<sequence>MSSFFLTGTDTNVGKTVASRAIIQALQNQGIQIVGYKPVAFSREECVYTDMENQQAAESDYDSQNNSDVLTLMKSTHEKVSYQEINSYTFRHSLPVFSVQGKHIRIEKMDADLARLNQKYQSVLVEGSYGWLTPINKTYCFADWAKSHQMPVVLVVGIKEGCLNHALLTVESIQQKGLPLLGWIANRINPCLGHYAEIIDLLSEKIDAPLLGQIPYLHKPEEQDLARYIHNLDRLTYMETVLAD</sequence>
<accession>Q9CN08</accession>
<comment type="function">
    <text evidence="1">Catalyzes a mechanistically unusual reaction, the ATP-dependent insertion of CO2 between the N7 and N8 nitrogen atoms of 7,8-diaminopelargonic acid (DAPA, also called 7,8-diammoniononanoate) to form a ureido ring.</text>
</comment>
<comment type="catalytic activity">
    <reaction evidence="1">
        <text>(7R,8S)-7,8-diammoniononanoate + CO2 + ATP = (4R,5S)-dethiobiotin + ADP + phosphate + 3 H(+)</text>
        <dbReference type="Rhea" id="RHEA:15805"/>
        <dbReference type="ChEBI" id="CHEBI:15378"/>
        <dbReference type="ChEBI" id="CHEBI:16526"/>
        <dbReference type="ChEBI" id="CHEBI:30616"/>
        <dbReference type="ChEBI" id="CHEBI:43474"/>
        <dbReference type="ChEBI" id="CHEBI:149469"/>
        <dbReference type="ChEBI" id="CHEBI:149473"/>
        <dbReference type="ChEBI" id="CHEBI:456216"/>
        <dbReference type="EC" id="6.3.3.3"/>
    </reaction>
</comment>
<comment type="cofactor">
    <cofactor evidence="1">
        <name>Mg(2+)</name>
        <dbReference type="ChEBI" id="CHEBI:18420"/>
    </cofactor>
</comment>
<comment type="pathway">
    <text evidence="1">Cofactor biosynthesis; biotin biosynthesis; biotin from 7,8-diaminononanoate: step 1/2.</text>
</comment>
<comment type="subunit">
    <text evidence="1">Homodimer.</text>
</comment>
<comment type="subcellular location">
    <subcellularLocation>
        <location evidence="1">Cytoplasm</location>
    </subcellularLocation>
</comment>
<comment type="similarity">
    <text evidence="1">Belongs to the dethiobiotin synthetase family.</text>
</comment>
<organism>
    <name type="scientific">Pasteurella multocida (strain Pm70)</name>
    <dbReference type="NCBI Taxonomy" id="272843"/>
    <lineage>
        <taxon>Bacteria</taxon>
        <taxon>Pseudomonadati</taxon>
        <taxon>Pseudomonadota</taxon>
        <taxon>Gammaproteobacteria</taxon>
        <taxon>Pasteurellales</taxon>
        <taxon>Pasteurellaceae</taxon>
        <taxon>Pasteurella</taxon>
    </lineage>
</organism>
<evidence type="ECO:0000255" key="1">
    <source>
        <dbReference type="HAMAP-Rule" id="MF_00336"/>
    </source>
</evidence>
<name>BIOD1_PASMU</name>
<feature type="chain" id="PRO_0000187980" description="ATP-dependent dethiobiotin synthetase BioD 1">
    <location>
        <begin position="1"/>
        <end position="244"/>
    </location>
</feature>
<feature type="active site" evidence="1">
    <location>
        <position position="37"/>
    </location>
</feature>
<feature type="binding site" evidence="1">
    <location>
        <begin position="12"/>
        <end position="17"/>
    </location>
    <ligand>
        <name>ATP</name>
        <dbReference type="ChEBI" id="CHEBI:30616"/>
    </ligand>
</feature>
<feature type="binding site" evidence="1">
    <location>
        <position position="16"/>
    </location>
    <ligand>
        <name>Mg(2+)</name>
        <dbReference type="ChEBI" id="CHEBI:18420"/>
    </ligand>
</feature>
<feature type="binding site" evidence="1">
    <location>
        <position position="68"/>
    </location>
    <ligand>
        <name>ATP</name>
        <dbReference type="ChEBI" id="CHEBI:30616"/>
    </ligand>
</feature>
<feature type="binding site" evidence="1">
    <location>
        <position position="68"/>
    </location>
    <ligand>
        <name>Mg(2+)</name>
        <dbReference type="ChEBI" id="CHEBI:18420"/>
    </ligand>
</feature>
<feature type="binding site" evidence="1">
    <location>
        <position position="126"/>
    </location>
    <ligand>
        <name>Mg(2+)</name>
        <dbReference type="ChEBI" id="CHEBI:18420"/>
    </ligand>
</feature>
<feature type="binding site" evidence="1">
    <location>
        <begin position="186"/>
        <end position="187"/>
    </location>
    <ligand>
        <name>ATP</name>
        <dbReference type="ChEBI" id="CHEBI:30616"/>
    </ligand>
</feature>
<feature type="binding site" evidence="1">
    <location>
        <begin position="215"/>
        <end position="217"/>
    </location>
    <ligand>
        <name>ATP</name>
        <dbReference type="ChEBI" id="CHEBI:30616"/>
    </ligand>
</feature>
<feature type="binding site" evidence="1">
    <location>
        <position position="222"/>
    </location>
    <ligand>
        <name>ATP</name>
        <dbReference type="ChEBI" id="CHEBI:30616"/>
    </ligand>
</feature>